<proteinExistence type="inferred from homology"/>
<evidence type="ECO:0000255" key="1">
    <source>
        <dbReference type="HAMAP-Rule" id="MF_00226"/>
    </source>
</evidence>
<accession>A7Z4W4</accession>
<comment type="similarity">
    <text evidence="1">Belongs to the CinA family.</text>
</comment>
<name>CINA_BACVZ</name>
<feature type="chain" id="PRO_1000058692" description="Putative competence-damage inducible protein">
    <location>
        <begin position="1"/>
        <end position="416"/>
    </location>
</feature>
<reference key="1">
    <citation type="journal article" date="2007" name="Nat. Biotechnol.">
        <title>Comparative analysis of the complete genome sequence of the plant growth-promoting bacterium Bacillus amyloliquefaciens FZB42.</title>
        <authorList>
            <person name="Chen X.H."/>
            <person name="Koumoutsi A."/>
            <person name="Scholz R."/>
            <person name="Eisenreich A."/>
            <person name="Schneider K."/>
            <person name="Heinemeyer I."/>
            <person name="Morgenstern B."/>
            <person name="Voss B."/>
            <person name="Hess W.R."/>
            <person name="Reva O."/>
            <person name="Junge H."/>
            <person name="Voigt B."/>
            <person name="Jungblut P.R."/>
            <person name="Vater J."/>
            <person name="Suessmuth R."/>
            <person name="Liesegang H."/>
            <person name="Strittmatter A."/>
            <person name="Gottschalk G."/>
            <person name="Borriss R."/>
        </authorList>
    </citation>
    <scope>NUCLEOTIDE SEQUENCE [LARGE SCALE GENOMIC DNA]</scope>
    <source>
        <strain>DSM 23117 / BGSC 10A6 / LMG 26770 / FZB42</strain>
    </source>
</reference>
<gene>
    <name evidence="1" type="primary">cinA</name>
    <name type="ordered locus">RBAM_016770</name>
</gene>
<dbReference type="EMBL" id="CP000560">
    <property type="protein sequence ID" value="ABS74040.1"/>
    <property type="molecule type" value="Genomic_DNA"/>
</dbReference>
<dbReference type="RefSeq" id="WP_007409822.1">
    <property type="nucleotide sequence ID" value="NC_009725.2"/>
</dbReference>
<dbReference type="SMR" id="A7Z4W4"/>
<dbReference type="GeneID" id="93080810"/>
<dbReference type="KEGG" id="bay:RBAM_016770"/>
<dbReference type="HOGENOM" id="CLU_030805_9_3_9"/>
<dbReference type="Proteomes" id="UP000001120">
    <property type="component" value="Chromosome"/>
</dbReference>
<dbReference type="CDD" id="cd00885">
    <property type="entry name" value="cinA"/>
    <property type="match status" value="1"/>
</dbReference>
<dbReference type="Gene3D" id="3.30.70.2860">
    <property type="match status" value="1"/>
</dbReference>
<dbReference type="Gene3D" id="3.90.950.20">
    <property type="entry name" value="CinA-like"/>
    <property type="match status" value="1"/>
</dbReference>
<dbReference type="Gene3D" id="3.40.980.10">
    <property type="entry name" value="MoaB/Mog-like domain"/>
    <property type="match status" value="1"/>
</dbReference>
<dbReference type="HAMAP" id="MF_00226_B">
    <property type="entry name" value="CinA_B"/>
    <property type="match status" value="1"/>
</dbReference>
<dbReference type="InterPro" id="IPR050101">
    <property type="entry name" value="CinA"/>
</dbReference>
<dbReference type="InterPro" id="IPR036653">
    <property type="entry name" value="CinA-like_C"/>
</dbReference>
<dbReference type="InterPro" id="IPR008136">
    <property type="entry name" value="CinA_C"/>
</dbReference>
<dbReference type="InterPro" id="IPR041424">
    <property type="entry name" value="CinA_KH"/>
</dbReference>
<dbReference type="InterPro" id="IPR008135">
    <property type="entry name" value="Competence-induced_CinA"/>
</dbReference>
<dbReference type="InterPro" id="IPR036425">
    <property type="entry name" value="MoaB/Mog-like_dom_sf"/>
</dbReference>
<dbReference type="InterPro" id="IPR001453">
    <property type="entry name" value="MoaB/Mog_dom"/>
</dbReference>
<dbReference type="NCBIfam" id="TIGR00200">
    <property type="entry name" value="cinA_nterm"/>
    <property type="match status" value="1"/>
</dbReference>
<dbReference type="NCBIfam" id="TIGR00177">
    <property type="entry name" value="molyb_syn"/>
    <property type="match status" value="1"/>
</dbReference>
<dbReference type="NCBIfam" id="TIGR00199">
    <property type="entry name" value="PncC_domain"/>
    <property type="match status" value="1"/>
</dbReference>
<dbReference type="NCBIfam" id="NF001813">
    <property type="entry name" value="PRK00549.1"/>
    <property type="match status" value="1"/>
</dbReference>
<dbReference type="PANTHER" id="PTHR13939">
    <property type="entry name" value="NICOTINAMIDE-NUCLEOTIDE AMIDOHYDROLASE PNCC"/>
    <property type="match status" value="1"/>
</dbReference>
<dbReference type="PANTHER" id="PTHR13939:SF0">
    <property type="entry name" value="NMN AMIDOHYDROLASE-LIKE PROTEIN YFAY"/>
    <property type="match status" value="1"/>
</dbReference>
<dbReference type="Pfam" id="PF02464">
    <property type="entry name" value="CinA"/>
    <property type="match status" value="1"/>
</dbReference>
<dbReference type="Pfam" id="PF18146">
    <property type="entry name" value="CinA_KH"/>
    <property type="match status" value="1"/>
</dbReference>
<dbReference type="Pfam" id="PF00994">
    <property type="entry name" value="MoCF_biosynth"/>
    <property type="match status" value="1"/>
</dbReference>
<dbReference type="PIRSF" id="PIRSF006728">
    <property type="entry name" value="CinA"/>
    <property type="match status" value="1"/>
</dbReference>
<dbReference type="SMART" id="SM00852">
    <property type="entry name" value="MoCF_biosynth"/>
    <property type="match status" value="1"/>
</dbReference>
<dbReference type="SUPFAM" id="SSF142433">
    <property type="entry name" value="CinA-like"/>
    <property type="match status" value="1"/>
</dbReference>
<dbReference type="SUPFAM" id="SSF53218">
    <property type="entry name" value="Molybdenum cofactor biosynthesis proteins"/>
    <property type="match status" value="1"/>
</dbReference>
<sequence>MEIAKKAEIIAVGSELLLGQIANTNAQFISKELAEIGVNVFYHTAVGDNPERLKQVIRIAEERSDLIIFSGGLGPTKDDLTKETIANTLGRPLVLNDEAFRSIEEYFAKTKRTMSPNNRKQALVIEGSDVLANHFGMAPGMLAEHGSRLYMLLPGPPSELRPMFENEAKPLLLKKLGSNEKIVSTVLRFFGIGESQLEADLEDIIDAQTNPTIAPLAADGEVTLRLTAKHADEKETERLLKETEAAILERVGEFFYGYDDTSLVKELSKACRQNGITISSAESFTGGLFSEWVTDLSGASQLFAGGVVCYSDSVKQHVLGVKAETLAESGAVSKECAKELAAGVRKLTGSDIGISFTGVAGPDPQEGHAPGRVFIGISAEGKEEVHEFNFAGSRTGIRKRAAKYGCHLILKMLDQK</sequence>
<organism>
    <name type="scientific">Bacillus velezensis (strain DSM 23117 / BGSC 10A6 / LMG 26770 / FZB42)</name>
    <name type="common">Bacillus amyloliquefaciens subsp. plantarum</name>
    <dbReference type="NCBI Taxonomy" id="326423"/>
    <lineage>
        <taxon>Bacteria</taxon>
        <taxon>Bacillati</taxon>
        <taxon>Bacillota</taxon>
        <taxon>Bacilli</taxon>
        <taxon>Bacillales</taxon>
        <taxon>Bacillaceae</taxon>
        <taxon>Bacillus</taxon>
        <taxon>Bacillus amyloliquefaciens group</taxon>
    </lineage>
</organism>
<protein>
    <recommendedName>
        <fullName evidence="1">Putative competence-damage inducible protein</fullName>
    </recommendedName>
</protein>